<feature type="chain" id="PRO_0000088963" description="Actin">
    <location>
        <begin position="1"/>
        <end position="377"/>
    </location>
</feature>
<proteinExistence type="inferred from homology"/>
<name>ACT_MESVI</name>
<dbReference type="EC" id="3.6.4.-" evidence="1"/>
<dbReference type="EMBL" id="AF061020">
    <property type="protein sequence ID" value="AAC16055.1"/>
    <property type="molecule type" value="Genomic_DNA"/>
</dbReference>
<dbReference type="GO" id="GO:0005737">
    <property type="term" value="C:cytoplasm"/>
    <property type="evidence" value="ECO:0007669"/>
    <property type="project" value="UniProtKB-KW"/>
</dbReference>
<dbReference type="GO" id="GO:0005856">
    <property type="term" value="C:cytoskeleton"/>
    <property type="evidence" value="ECO:0007669"/>
    <property type="project" value="UniProtKB-SubCell"/>
</dbReference>
<dbReference type="GO" id="GO:0005524">
    <property type="term" value="F:ATP binding"/>
    <property type="evidence" value="ECO:0007669"/>
    <property type="project" value="UniProtKB-KW"/>
</dbReference>
<dbReference type="GO" id="GO:0016787">
    <property type="term" value="F:hydrolase activity"/>
    <property type="evidence" value="ECO:0007669"/>
    <property type="project" value="UniProtKB-KW"/>
</dbReference>
<dbReference type="CDD" id="cd10224">
    <property type="entry name" value="ASKHA_NBD_actin"/>
    <property type="match status" value="1"/>
</dbReference>
<dbReference type="FunFam" id="2.30.36.70:FF:000001">
    <property type="entry name" value="Actin, alpha skeletal muscle"/>
    <property type="match status" value="1"/>
</dbReference>
<dbReference type="FunFam" id="3.30.420.40:FF:000291">
    <property type="entry name" value="Actin, alpha skeletal muscle"/>
    <property type="match status" value="1"/>
</dbReference>
<dbReference type="FunFam" id="3.90.640.10:FF:000047">
    <property type="entry name" value="Actin, alpha skeletal muscle"/>
    <property type="match status" value="1"/>
</dbReference>
<dbReference type="FunFam" id="3.30.420.40:FF:000404">
    <property type="entry name" value="Major actin"/>
    <property type="match status" value="1"/>
</dbReference>
<dbReference type="Gene3D" id="3.30.420.40">
    <property type="match status" value="2"/>
</dbReference>
<dbReference type="Gene3D" id="3.90.640.10">
    <property type="entry name" value="Actin, Chain A, domain 4"/>
    <property type="match status" value="1"/>
</dbReference>
<dbReference type="InterPro" id="IPR004000">
    <property type="entry name" value="Actin"/>
</dbReference>
<dbReference type="InterPro" id="IPR020902">
    <property type="entry name" value="Actin/actin-like_CS"/>
</dbReference>
<dbReference type="InterPro" id="IPR004001">
    <property type="entry name" value="Actin_CS"/>
</dbReference>
<dbReference type="InterPro" id="IPR043129">
    <property type="entry name" value="ATPase_NBD"/>
</dbReference>
<dbReference type="PANTHER" id="PTHR11937">
    <property type="entry name" value="ACTIN"/>
    <property type="match status" value="1"/>
</dbReference>
<dbReference type="Pfam" id="PF00022">
    <property type="entry name" value="Actin"/>
    <property type="match status" value="1"/>
</dbReference>
<dbReference type="PRINTS" id="PR00190">
    <property type="entry name" value="ACTIN"/>
</dbReference>
<dbReference type="SMART" id="SM00268">
    <property type="entry name" value="ACTIN"/>
    <property type="match status" value="1"/>
</dbReference>
<dbReference type="SUPFAM" id="SSF53067">
    <property type="entry name" value="Actin-like ATPase domain"/>
    <property type="match status" value="2"/>
</dbReference>
<dbReference type="PROSITE" id="PS00406">
    <property type="entry name" value="ACTINS_1"/>
    <property type="match status" value="1"/>
</dbReference>
<dbReference type="PROSITE" id="PS00432">
    <property type="entry name" value="ACTINS_2"/>
    <property type="match status" value="1"/>
</dbReference>
<dbReference type="PROSITE" id="PS01132">
    <property type="entry name" value="ACTINS_ACT_LIKE"/>
    <property type="match status" value="1"/>
</dbReference>
<keyword id="KW-0067">ATP-binding</keyword>
<keyword id="KW-0963">Cytoplasm</keyword>
<keyword id="KW-0206">Cytoskeleton</keyword>
<keyword id="KW-0378">Hydrolase</keyword>
<keyword id="KW-0547">Nucleotide-binding</keyword>
<comment type="function">
    <text>Actins are highly conserved proteins that are involved in various types of cell motility and are ubiquitously expressed in all eukaryotic cells.</text>
</comment>
<comment type="catalytic activity">
    <reaction evidence="1">
        <text>ATP + H2O = ADP + phosphate + H(+)</text>
        <dbReference type="Rhea" id="RHEA:13065"/>
        <dbReference type="ChEBI" id="CHEBI:15377"/>
        <dbReference type="ChEBI" id="CHEBI:15378"/>
        <dbReference type="ChEBI" id="CHEBI:30616"/>
        <dbReference type="ChEBI" id="CHEBI:43474"/>
        <dbReference type="ChEBI" id="CHEBI:456216"/>
    </reaction>
</comment>
<comment type="subcellular location">
    <subcellularLocation>
        <location>Cytoplasm</location>
        <location>Cytoskeleton</location>
    </subcellularLocation>
</comment>
<comment type="similarity">
    <text evidence="2">Belongs to the actin family.</text>
</comment>
<sequence length="377" mass="41590">MADEGEVSALMCDNGSGMVKAGFAGDDAPRAVFPSIVGRPRHQGVMVGMGQKDAYVGDEAQSKRGILTLKYPIEHGIVTNWDDMEKIWHHTFYNELRVAPEEHPVLLTEAPLNPKANREKMTQIMFETFNVPAMYVAIQAVLSLYASGRTTGIVLDSGDGVTHTVPIYEGYALPHAILRLDLAGRDLTDYLMKILTERGYSFTTTAEREIVRDIKEKLAYVAIDYEAELATANTSSSIEKSYELPDGQVITIGNERFRCPEVLFNPGYVGMESAGIHETTYNSIMRCDVDIRKDLYGNIVLSGGSTMXPGIADRMSKEITALAPSSMKIKVVAPPERKYSVWIGGSILASLSTFQAMWIAKSEYDESGPSIVHRKCF</sequence>
<reference key="1">
    <citation type="journal article" date="1998" name="J. Mol. Evol.">
        <title>Actin phylogeny identifies Mesostigma viride as a flagellate ancestor of the land plants.</title>
        <authorList>
            <person name="Bhattacharya D."/>
            <person name="Weber K."/>
            <person name="An S.S."/>
            <person name="Berning-Koch W."/>
        </authorList>
    </citation>
    <scope>NUCLEOTIDE SEQUENCE [GENOMIC DNA]</scope>
    <source>
        <strain>SAG 50-1</strain>
    </source>
</reference>
<accession>O65316</accession>
<evidence type="ECO:0000250" key="1">
    <source>
        <dbReference type="UniProtKB" id="P68137"/>
    </source>
</evidence>
<evidence type="ECO:0000305" key="2"/>
<organism>
    <name type="scientific">Mesostigma viride</name>
    <name type="common">Green alga</name>
    <dbReference type="NCBI Taxonomy" id="41882"/>
    <lineage>
        <taxon>Eukaryota</taxon>
        <taxon>Viridiplantae</taxon>
        <taxon>Streptophyta</taxon>
        <taxon>Mesostigmatophyceae</taxon>
        <taxon>Mesostigmatales</taxon>
        <taxon>Mesostigmataceae</taxon>
        <taxon>Mesostigma</taxon>
    </lineage>
</organism>
<protein>
    <recommendedName>
        <fullName>Actin</fullName>
        <ecNumber evidence="1">3.6.4.-</ecNumber>
    </recommendedName>
</protein>